<feature type="chain" id="PRO_0000166552" description="Probable GTP pyrophosphokinase">
    <location>
        <begin position="1"/>
        <end position="790"/>
    </location>
</feature>
<feature type="domain" description="HD" evidence="3">
    <location>
        <begin position="105"/>
        <end position="202"/>
    </location>
</feature>
<feature type="domain" description="TGS" evidence="4">
    <location>
        <begin position="450"/>
        <end position="511"/>
    </location>
</feature>
<feature type="domain" description="ACT" evidence="2">
    <location>
        <begin position="714"/>
        <end position="788"/>
    </location>
</feature>
<feature type="region of interest" description="Disordered" evidence="5">
    <location>
        <begin position="1"/>
        <end position="37"/>
    </location>
</feature>
<feature type="region of interest" description="Disordered" evidence="5">
    <location>
        <begin position="620"/>
        <end position="644"/>
    </location>
</feature>
<name>RELA_MYCBO</name>
<comment type="function">
    <text evidence="1">In eubacteria ppGpp (guanosine 3'-diphosphate 5'-diphosphate) is a mediator of the stringent response that coordinates a variety of cellular activities in response to changes in nutritional abundance. This enzyme catalyzes the formation of pppGpp which is then hydrolyzed to form ppGpp (By similarity).</text>
</comment>
<comment type="catalytic activity">
    <reaction>
        <text>GTP + ATP = guanosine 3'-diphosphate 5'-triphosphate + AMP</text>
        <dbReference type="Rhea" id="RHEA:22088"/>
        <dbReference type="ChEBI" id="CHEBI:30616"/>
        <dbReference type="ChEBI" id="CHEBI:37565"/>
        <dbReference type="ChEBI" id="CHEBI:142410"/>
        <dbReference type="ChEBI" id="CHEBI:456215"/>
        <dbReference type="EC" id="2.7.6.5"/>
    </reaction>
</comment>
<comment type="pathway">
    <text>Purine metabolism; ppGpp biosynthesis; ppGpp from GTP: step 1/2.</text>
</comment>
<comment type="similarity">
    <text evidence="6">Belongs to the RelA/SpoT family.</text>
</comment>
<accession>P66015</accession>
<accession>A0A1R3Y1M7</accession>
<accession>Q50638</accession>
<accession>X2BLD0</accession>
<sequence>MAEDQLTAQAVAPPTEASAALEPALETPESPVETLKTSISASRRVRARLARRMTAQRSTTNPVLEPLVAVHREIYPKADLSILQRAYEVADQRHASQLRQSGDPYITHPLAVANILAELGMDTTTLVAALLHDTVEDTGYTLEALTEEFGEEVGHLVDGVTKLDRVVLGSAAEGETIRKMITAMARDPRVLVIKVADRLHNMRTMRFLPPEKQARKARETLEVIAPLAHRLGMASVKWELEDLSFAILHPKKYEEIVRLVAGRAPSRDTYLAKVRAEIVNTLTASKIKATVEGRPKHYWSIYQKMIVKGRDFDDIHDLVGVRILCDEIRDCYAAVGVVHSLWQPMAGRFKDYIAQPRYGVYQSLHTTVVGPEGKPLEVQIRTRDMHRTAEYGIAAHWRYKEAKGRNGVLHPHAAAEIDDMAWMRQLLDWQREAADPGEFLESLRYDLAVQEIFVFTPKGDVITLPTGSTPVDFAYAVHTEVGHRCIGARVNGRLVALERKLENGEVVEVFTSKAPNAGPSRDWQQFVVSPRAKTKIRQWFAKERREEALETGKDAMAREVRRGGLPLQRLVNGESMAAVARELHYADVSALYTAIGEGHVSAKHVVQRLLAELGGIDQAEEELAERSTPATMPRRPRSTDDVGVSVPGAPGVLTKLAKCCTPVPGDVIMGFVTRGGGVSVHRTDCTNAASLQQQAERIIEVLWAPSPSSVFLVAIQVEALDRHRLLSDVTRALADEKVNILSASVTTSGDRVAISRFTFEMGDPKHLGHLLNAVRNVEGVYDVYRVTSAA</sequence>
<organism>
    <name type="scientific">Mycobacterium bovis (strain ATCC BAA-935 / AF2122/97)</name>
    <dbReference type="NCBI Taxonomy" id="233413"/>
    <lineage>
        <taxon>Bacteria</taxon>
        <taxon>Bacillati</taxon>
        <taxon>Actinomycetota</taxon>
        <taxon>Actinomycetes</taxon>
        <taxon>Mycobacteriales</taxon>
        <taxon>Mycobacteriaceae</taxon>
        <taxon>Mycobacterium</taxon>
        <taxon>Mycobacterium tuberculosis complex</taxon>
    </lineage>
</organism>
<evidence type="ECO:0000250" key="1"/>
<evidence type="ECO:0000255" key="2">
    <source>
        <dbReference type="PROSITE-ProRule" id="PRU01007"/>
    </source>
</evidence>
<evidence type="ECO:0000255" key="3">
    <source>
        <dbReference type="PROSITE-ProRule" id="PRU01175"/>
    </source>
</evidence>
<evidence type="ECO:0000255" key="4">
    <source>
        <dbReference type="PROSITE-ProRule" id="PRU01228"/>
    </source>
</evidence>
<evidence type="ECO:0000256" key="5">
    <source>
        <dbReference type="SAM" id="MobiDB-lite"/>
    </source>
</evidence>
<evidence type="ECO:0000305" key="6"/>
<dbReference type="EC" id="2.7.6.5"/>
<dbReference type="EMBL" id="LT708304">
    <property type="protein sequence ID" value="SIU01232.1"/>
    <property type="molecule type" value="Genomic_DNA"/>
</dbReference>
<dbReference type="RefSeq" id="NP_856260.1">
    <property type="nucleotide sequence ID" value="NC_002945.3"/>
</dbReference>
<dbReference type="RefSeq" id="WP_003413368.1">
    <property type="nucleotide sequence ID" value="NC_002945.4"/>
</dbReference>
<dbReference type="SMR" id="P66015"/>
<dbReference type="KEGG" id="mbo:BQ2027_MB2614C"/>
<dbReference type="PATRIC" id="fig|233413.5.peg.2875"/>
<dbReference type="UniPathway" id="UPA00908">
    <property type="reaction ID" value="UER00884"/>
</dbReference>
<dbReference type="Proteomes" id="UP000001419">
    <property type="component" value="Chromosome"/>
</dbReference>
<dbReference type="GO" id="GO:0005886">
    <property type="term" value="C:plasma membrane"/>
    <property type="evidence" value="ECO:0007669"/>
    <property type="project" value="TreeGrafter"/>
</dbReference>
<dbReference type="GO" id="GO:0005524">
    <property type="term" value="F:ATP binding"/>
    <property type="evidence" value="ECO:0007669"/>
    <property type="project" value="UniProtKB-KW"/>
</dbReference>
<dbReference type="GO" id="GO:0005525">
    <property type="term" value="F:GTP binding"/>
    <property type="evidence" value="ECO:0007669"/>
    <property type="project" value="UniProtKB-KW"/>
</dbReference>
<dbReference type="GO" id="GO:0008728">
    <property type="term" value="F:GTP diphosphokinase activity"/>
    <property type="evidence" value="ECO:0007669"/>
    <property type="project" value="UniProtKB-EC"/>
</dbReference>
<dbReference type="GO" id="GO:0016301">
    <property type="term" value="F:kinase activity"/>
    <property type="evidence" value="ECO:0007669"/>
    <property type="project" value="UniProtKB-KW"/>
</dbReference>
<dbReference type="GO" id="GO:0015970">
    <property type="term" value="P:guanosine tetraphosphate biosynthetic process"/>
    <property type="evidence" value="ECO:0007669"/>
    <property type="project" value="UniProtKB-UniPathway"/>
</dbReference>
<dbReference type="CDD" id="cd04876">
    <property type="entry name" value="ACT_RelA-SpoT"/>
    <property type="match status" value="1"/>
</dbReference>
<dbReference type="CDD" id="cd00077">
    <property type="entry name" value="HDc"/>
    <property type="match status" value="1"/>
</dbReference>
<dbReference type="CDD" id="cd05399">
    <property type="entry name" value="NT_Rel-Spo_like"/>
    <property type="match status" value="1"/>
</dbReference>
<dbReference type="CDD" id="cd01668">
    <property type="entry name" value="TGS_RSH"/>
    <property type="match status" value="1"/>
</dbReference>
<dbReference type="FunFam" id="3.10.20.30:FF:000002">
    <property type="entry name" value="GTP pyrophosphokinase (RelA/SpoT)"/>
    <property type="match status" value="1"/>
</dbReference>
<dbReference type="FunFam" id="1.10.3210.10:FF:000001">
    <property type="entry name" value="GTP pyrophosphokinase RelA"/>
    <property type="match status" value="1"/>
</dbReference>
<dbReference type="FunFam" id="3.30.460.10:FF:000001">
    <property type="entry name" value="GTP pyrophosphokinase RelA"/>
    <property type="match status" value="1"/>
</dbReference>
<dbReference type="FunFam" id="3.30.70.260:FF:000003">
    <property type="entry name" value="GTP pyrophosphokinase RelA"/>
    <property type="match status" value="1"/>
</dbReference>
<dbReference type="Gene3D" id="3.10.20.30">
    <property type="match status" value="1"/>
</dbReference>
<dbReference type="Gene3D" id="3.30.70.260">
    <property type="match status" value="1"/>
</dbReference>
<dbReference type="Gene3D" id="3.30.460.10">
    <property type="entry name" value="Beta Polymerase, domain 2"/>
    <property type="match status" value="1"/>
</dbReference>
<dbReference type="Gene3D" id="1.10.3210.10">
    <property type="entry name" value="Hypothetical protein af1432"/>
    <property type="match status" value="1"/>
</dbReference>
<dbReference type="InterPro" id="IPR045865">
    <property type="entry name" value="ACT-like_dom_sf"/>
</dbReference>
<dbReference type="InterPro" id="IPR002912">
    <property type="entry name" value="ACT_dom"/>
</dbReference>
<dbReference type="InterPro" id="IPR012675">
    <property type="entry name" value="Beta-grasp_dom_sf"/>
</dbReference>
<dbReference type="InterPro" id="IPR003607">
    <property type="entry name" value="HD/PDEase_dom"/>
</dbReference>
<dbReference type="InterPro" id="IPR006674">
    <property type="entry name" value="HD_domain"/>
</dbReference>
<dbReference type="InterPro" id="IPR043519">
    <property type="entry name" value="NT_sf"/>
</dbReference>
<dbReference type="InterPro" id="IPR004811">
    <property type="entry name" value="RelA/Spo_fam"/>
</dbReference>
<dbReference type="InterPro" id="IPR045600">
    <property type="entry name" value="RelA/SpoT_AH_RIS"/>
</dbReference>
<dbReference type="InterPro" id="IPR007685">
    <property type="entry name" value="RelA_SpoT"/>
</dbReference>
<dbReference type="InterPro" id="IPR004095">
    <property type="entry name" value="TGS"/>
</dbReference>
<dbReference type="InterPro" id="IPR012676">
    <property type="entry name" value="TGS-like"/>
</dbReference>
<dbReference type="InterPro" id="IPR033655">
    <property type="entry name" value="TGS_RelA/SpoT"/>
</dbReference>
<dbReference type="NCBIfam" id="TIGR00691">
    <property type="entry name" value="spoT_relA"/>
    <property type="match status" value="1"/>
</dbReference>
<dbReference type="PANTHER" id="PTHR21262:SF31">
    <property type="entry name" value="GTP PYROPHOSPHOKINASE"/>
    <property type="match status" value="1"/>
</dbReference>
<dbReference type="PANTHER" id="PTHR21262">
    <property type="entry name" value="GUANOSINE-3',5'-BIS DIPHOSPHATE 3'-PYROPHOSPHOHYDROLASE"/>
    <property type="match status" value="1"/>
</dbReference>
<dbReference type="Pfam" id="PF13291">
    <property type="entry name" value="ACT_4"/>
    <property type="match status" value="1"/>
</dbReference>
<dbReference type="Pfam" id="PF13328">
    <property type="entry name" value="HD_4"/>
    <property type="match status" value="1"/>
</dbReference>
<dbReference type="Pfam" id="PF19296">
    <property type="entry name" value="RelA_AH_RIS"/>
    <property type="match status" value="1"/>
</dbReference>
<dbReference type="Pfam" id="PF04607">
    <property type="entry name" value="RelA_SpoT"/>
    <property type="match status" value="1"/>
</dbReference>
<dbReference type="Pfam" id="PF02824">
    <property type="entry name" value="TGS"/>
    <property type="match status" value="1"/>
</dbReference>
<dbReference type="SMART" id="SM00471">
    <property type="entry name" value="HDc"/>
    <property type="match status" value="1"/>
</dbReference>
<dbReference type="SMART" id="SM00954">
    <property type="entry name" value="RelA_SpoT"/>
    <property type="match status" value="1"/>
</dbReference>
<dbReference type="SUPFAM" id="SSF55021">
    <property type="entry name" value="ACT-like"/>
    <property type="match status" value="1"/>
</dbReference>
<dbReference type="SUPFAM" id="SSF109604">
    <property type="entry name" value="HD-domain/PDEase-like"/>
    <property type="match status" value="1"/>
</dbReference>
<dbReference type="SUPFAM" id="SSF81301">
    <property type="entry name" value="Nucleotidyltransferase"/>
    <property type="match status" value="1"/>
</dbReference>
<dbReference type="SUPFAM" id="SSF81271">
    <property type="entry name" value="TGS-like"/>
    <property type="match status" value="1"/>
</dbReference>
<dbReference type="PROSITE" id="PS51671">
    <property type="entry name" value="ACT"/>
    <property type="match status" value="1"/>
</dbReference>
<dbReference type="PROSITE" id="PS51831">
    <property type="entry name" value="HD"/>
    <property type="match status" value="1"/>
</dbReference>
<dbReference type="PROSITE" id="PS51880">
    <property type="entry name" value="TGS"/>
    <property type="match status" value="1"/>
</dbReference>
<proteinExistence type="inferred from homology"/>
<protein>
    <recommendedName>
        <fullName>Probable GTP pyrophosphokinase</fullName>
        <ecNumber>2.7.6.5</ecNumber>
    </recommendedName>
    <alternativeName>
        <fullName>(p)ppGpp synthase</fullName>
    </alternativeName>
    <alternativeName>
        <fullName>ATP:GTP 3'-pyrophosphotransferase</fullName>
    </alternativeName>
    <alternativeName>
        <fullName>ppGpp synthase I</fullName>
    </alternativeName>
</protein>
<reference key="1">
    <citation type="journal article" date="2003" name="Proc. Natl. Acad. Sci. U.S.A.">
        <title>The complete genome sequence of Mycobacterium bovis.</title>
        <authorList>
            <person name="Garnier T."/>
            <person name="Eiglmeier K."/>
            <person name="Camus J.-C."/>
            <person name="Medina N."/>
            <person name="Mansoor H."/>
            <person name="Pryor M."/>
            <person name="Duthoy S."/>
            <person name="Grondin S."/>
            <person name="Lacroix C."/>
            <person name="Monsempe C."/>
            <person name="Simon S."/>
            <person name="Harris B."/>
            <person name="Atkin R."/>
            <person name="Doggett J."/>
            <person name="Mayes R."/>
            <person name="Keating L."/>
            <person name="Wheeler P.R."/>
            <person name="Parkhill J."/>
            <person name="Barrell B.G."/>
            <person name="Cole S.T."/>
            <person name="Gordon S.V."/>
            <person name="Hewinson R.G."/>
        </authorList>
    </citation>
    <scope>NUCLEOTIDE SEQUENCE [LARGE SCALE GENOMIC DNA]</scope>
    <source>
        <strain>ATCC BAA-935 / AF2122/97</strain>
    </source>
</reference>
<reference key="2">
    <citation type="journal article" date="2017" name="Genome Announc.">
        <title>Updated reference genome sequence and annotation of Mycobacterium bovis AF2122/97.</title>
        <authorList>
            <person name="Malone K.M."/>
            <person name="Farrell D."/>
            <person name="Stuber T.P."/>
            <person name="Schubert O.T."/>
            <person name="Aebersold R."/>
            <person name="Robbe-Austerman S."/>
            <person name="Gordon S.V."/>
        </authorList>
    </citation>
    <scope>NUCLEOTIDE SEQUENCE [LARGE SCALE GENOMIC DNA]</scope>
    <scope>GENOME REANNOTATION</scope>
    <source>
        <strain>ATCC BAA-935 / AF2122/97</strain>
    </source>
</reference>
<keyword id="KW-0067">ATP-binding</keyword>
<keyword id="KW-0342">GTP-binding</keyword>
<keyword id="KW-0418">Kinase</keyword>
<keyword id="KW-0547">Nucleotide-binding</keyword>
<keyword id="KW-1185">Reference proteome</keyword>
<keyword id="KW-0808">Transferase</keyword>
<gene>
    <name type="primary">relA</name>
    <name type="ordered locus">BQ2027_MB2614C</name>
</gene>